<sequence length="232" mass="24807">MSLIESIRKQVTPIHPEGYVFIASFGVATLVLGSFFSPLGWIGAFATAWCAYFFRDPVRQTPLDEGLVISPADGVISAVGFFPPPPELGLGVEPLQRISVFMSVFDCHVNRAPVAGRIVKIAYKPGLFLNADLDKASEDNERNGLVIETAAGRFGVVQIAGLVARRIVCFVRQGESIGVGDRIGLIRFGSRVDVYLPGTARALVTVGSKAVAGETVLAELRAGANRRAFKSS</sequence>
<dbReference type="EC" id="4.1.1.65" evidence="1"/>
<dbReference type="EMBL" id="CP001280">
    <property type="protein sequence ID" value="ACK49123.1"/>
    <property type="molecule type" value="Genomic_DNA"/>
</dbReference>
<dbReference type="STRING" id="395965.Msil_0141"/>
<dbReference type="KEGG" id="msl:Msil_0141"/>
<dbReference type="eggNOG" id="COG0688">
    <property type="taxonomic scope" value="Bacteria"/>
</dbReference>
<dbReference type="HOGENOM" id="CLU_072492_0_0_5"/>
<dbReference type="OrthoDB" id="9790893at2"/>
<dbReference type="UniPathway" id="UPA00558">
    <property type="reaction ID" value="UER00616"/>
</dbReference>
<dbReference type="Proteomes" id="UP000002257">
    <property type="component" value="Chromosome"/>
</dbReference>
<dbReference type="GO" id="GO:0005886">
    <property type="term" value="C:plasma membrane"/>
    <property type="evidence" value="ECO:0007669"/>
    <property type="project" value="UniProtKB-SubCell"/>
</dbReference>
<dbReference type="GO" id="GO:0004609">
    <property type="term" value="F:phosphatidylserine decarboxylase activity"/>
    <property type="evidence" value="ECO:0007669"/>
    <property type="project" value="UniProtKB-UniRule"/>
</dbReference>
<dbReference type="GO" id="GO:0006646">
    <property type="term" value="P:phosphatidylethanolamine biosynthetic process"/>
    <property type="evidence" value="ECO:0007669"/>
    <property type="project" value="UniProtKB-UniRule"/>
</dbReference>
<dbReference type="HAMAP" id="MF_00664">
    <property type="entry name" value="PS_decarb_PSD_A"/>
    <property type="match status" value="1"/>
</dbReference>
<dbReference type="InterPro" id="IPR003817">
    <property type="entry name" value="PS_Dcarbxylase"/>
</dbReference>
<dbReference type="InterPro" id="IPR033175">
    <property type="entry name" value="PSD-A"/>
</dbReference>
<dbReference type="NCBIfam" id="NF003677">
    <property type="entry name" value="PRK05305.1-1"/>
    <property type="match status" value="1"/>
</dbReference>
<dbReference type="NCBIfam" id="NF003678">
    <property type="entry name" value="PRK05305.1-2"/>
    <property type="match status" value="1"/>
</dbReference>
<dbReference type="NCBIfam" id="NF003679">
    <property type="entry name" value="PRK05305.1-3"/>
    <property type="match status" value="1"/>
</dbReference>
<dbReference type="NCBIfam" id="NF003685">
    <property type="entry name" value="PRK05305.2-5"/>
    <property type="match status" value="1"/>
</dbReference>
<dbReference type="PANTHER" id="PTHR35809">
    <property type="entry name" value="ARCHAETIDYLSERINE DECARBOXYLASE PROENZYME-RELATED"/>
    <property type="match status" value="1"/>
</dbReference>
<dbReference type="PANTHER" id="PTHR35809:SF1">
    <property type="entry name" value="ARCHAETIDYLSERINE DECARBOXYLASE PROENZYME-RELATED"/>
    <property type="match status" value="1"/>
</dbReference>
<dbReference type="Pfam" id="PF02666">
    <property type="entry name" value="PS_Dcarbxylase"/>
    <property type="match status" value="1"/>
</dbReference>
<accession>B8EMY8</accession>
<gene>
    <name evidence="1" type="primary">psd</name>
    <name type="ordered locus">Msil_0141</name>
</gene>
<name>PSD_METSB</name>
<evidence type="ECO:0000255" key="1">
    <source>
        <dbReference type="HAMAP-Rule" id="MF_00664"/>
    </source>
</evidence>
<comment type="function">
    <text evidence="1">Catalyzes the formation of phosphatidylethanolamine (PtdEtn) from phosphatidylserine (PtdSer).</text>
</comment>
<comment type="catalytic activity">
    <reaction evidence="1">
        <text>a 1,2-diacyl-sn-glycero-3-phospho-L-serine + H(+) = a 1,2-diacyl-sn-glycero-3-phosphoethanolamine + CO2</text>
        <dbReference type="Rhea" id="RHEA:20828"/>
        <dbReference type="ChEBI" id="CHEBI:15378"/>
        <dbReference type="ChEBI" id="CHEBI:16526"/>
        <dbReference type="ChEBI" id="CHEBI:57262"/>
        <dbReference type="ChEBI" id="CHEBI:64612"/>
        <dbReference type="EC" id="4.1.1.65"/>
    </reaction>
</comment>
<comment type="cofactor">
    <cofactor evidence="1">
        <name>pyruvate</name>
        <dbReference type="ChEBI" id="CHEBI:15361"/>
    </cofactor>
    <text evidence="1">Binds 1 pyruvoyl group covalently per subunit.</text>
</comment>
<comment type="pathway">
    <text evidence="1">Phospholipid metabolism; phosphatidylethanolamine biosynthesis; phosphatidylethanolamine from CDP-diacylglycerol: step 2/2.</text>
</comment>
<comment type="subunit">
    <text evidence="1">Heterodimer of a large membrane-associated beta subunit and a small pyruvoyl-containing alpha subunit.</text>
</comment>
<comment type="subcellular location">
    <subcellularLocation>
        <location evidence="1">Cell membrane</location>
        <topology evidence="1">Peripheral membrane protein</topology>
    </subcellularLocation>
</comment>
<comment type="PTM">
    <text evidence="1">Is synthesized initially as an inactive proenzyme. Formation of the active enzyme involves a self-maturation process in which the active site pyruvoyl group is generated from an internal serine residue via an autocatalytic post-translational modification. Two non-identical subunits are generated from the proenzyme in this reaction, and the pyruvate is formed at the N-terminus of the alpha chain, which is derived from the carboxyl end of the proenzyme. The post-translation cleavage follows an unusual pathway, termed non-hydrolytic serinolysis, in which the side chain hydroxyl group of the serine supplies its oxygen atom to form the C-terminus of the beta chain, while the remainder of the serine residue undergoes an oxidative deamination to produce ammonia and the pyruvoyl prosthetic group on the alpha chain.</text>
</comment>
<comment type="similarity">
    <text evidence="1">Belongs to the phosphatidylserine decarboxylase family. PSD-A subfamily.</text>
</comment>
<protein>
    <recommendedName>
        <fullName evidence="1">Phosphatidylserine decarboxylase proenzyme</fullName>
        <ecNumber evidence="1">4.1.1.65</ecNumber>
    </recommendedName>
    <component>
        <recommendedName>
            <fullName evidence="1">Phosphatidylserine decarboxylase alpha chain</fullName>
        </recommendedName>
    </component>
    <component>
        <recommendedName>
            <fullName evidence="1">Phosphatidylserine decarboxylase beta chain</fullName>
        </recommendedName>
    </component>
</protein>
<organism>
    <name type="scientific">Methylocella silvestris (strain DSM 15510 / CIP 108128 / LMG 27833 / NCIMB 13906 / BL2)</name>
    <dbReference type="NCBI Taxonomy" id="395965"/>
    <lineage>
        <taxon>Bacteria</taxon>
        <taxon>Pseudomonadati</taxon>
        <taxon>Pseudomonadota</taxon>
        <taxon>Alphaproteobacteria</taxon>
        <taxon>Hyphomicrobiales</taxon>
        <taxon>Beijerinckiaceae</taxon>
        <taxon>Methylocella</taxon>
    </lineage>
</organism>
<proteinExistence type="inferred from homology"/>
<feature type="chain" id="PRO_1000192898" description="Phosphatidylserine decarboxylase beta chain" evidence="1">
    <location>
        <begin position="1"/>
        <end position="189"/>
    </location>
</feature>
<feature type="chain" id="PRO_1000192899" description="Phosphatidylserine decarboxylase alpha chain" evidence="1">
    <location>
        <begin position="190"/>
        <end position="232"/>
    </location>
</feature>
<feature type="active site" description="Schiff-base intermediate with substrate; via pyruvic acid" evidence="1">
    <location>
        <position position="190"/>
    </location>
</feature>
<feature type="site" description="Cleavage (non-hydrolytic); by autocatalysis" evidence="1">
    <location>
        <begin position="189"/>
        <end position="190"/>
    </location>
</feature>
<feature type="modified residue" description="Pyruvic acid (Ser); by autocatalysis" evidence="1">
    <location>
        <position position="190"/>
    </location>
</feature>
<reference key="1">
    <citation type="journal article" date="2010" name="J. Bacteriol.">
        <title>Complete genome sequence of the aerobic facultative methanotroph Methylocella silvestris BL2.</title>
        <authorList>
            <person name="Chen Y."/>
            <person name="Crombie A."/>
            <person name="Rahman M.T."/>
            <person name="Dedysh S.N."/>
            <person name="Liesack W."/>
            <person name="Stott M.B."/>
            <person name="Alam M."/>
            <person name="Theisen A.R."/>
            <person name="Murrell J.C."/>
            <person name="Dunfield P.F."/>
        </authorList>
    </citation>
    <scope>NUCLEOTIDE SEQUENCE [LARGE SCALE GENOMIC DNA]</scope>
    <source>
        <strain>DSM 15510 / CIP 108128 / LMG 27833 / NCIMB 13906 / BL2</strain>
    </source>
</reference>
<keyword id="KW-1003">Cell membrane</keyword>
<keyword id="KW-0210">Decarboxylase</keyword>
<keyword id="KW-0444">Lipid biosynthesis</keyword>
<keyword id="KW-0443">Lipid metabolism</keyword>
<keyword id="KW-0456">Lyase</keyword>
<keyword id="KW-0472">Membrane</keyword>
<keyword id="KW-0594">Phospholipid biosynthesis</keyword>
<keyword id="KW-1208">Phospholipid metabolism</keyword>
<keyword id="KW-0670">Pyruvate</keyword>
<keyword id="KW-1185">Reference proteome</keyword>
<keyword id="KW-0865">Zymogen</keyword>